<sequence>MRYLATLLLSLAVLITAGCGWHLRDTTQVPSTMKVMILDSGDPNGPLSRAVRNQLRLNGVELLDKETTRKDVPSLRLGKVSIAKDTASVFRNGQTAEYQMIMTVNATVLIPGRDIYPISAKVFRSFFDNPQMALAKDNEQDMIVKEMYDRAAEQLIRKLPSIRAADIRSDEEQTSTTTDTPATPARVSTTLGN</sequence>
<name>LPTE_ECO24</name>
<dbReference type="EMBL" id="CP000800">
    <property type="protein sequence ID" value="ABV20588.1"/>
    <property type="molecule type" value="Genomic_DNA"/>
</dbReference>
<dbReference type="RefSeq" id="WP_001269673.1">
    <property type="nucleotide sequence ID" value="NC_009801.1"/>
</dbReference>
<dbReference type="SMR" id="A7ZJ30"/>
<dbReference type="GeneID" id="93776841"/>
<dbReference type="KEGG" id="ecw:EcE24377A_0667"/>
<dbReference type="HOGENOM" id="CLU_103309_1_1_6"/>
<dbReference type="Proteomes" id="UP000001122">
    <property type="component" value="Chromosome"/>
</dbReference>
<dbReference type="GO" id="GO:0009279">
    <property type="term" value="C:cell outer membrane"/>
    <property type="evidence" value="ECO:0007669"/>
    <property type="project" value="UniProtKB-SubCell"/>
</dbReference>
<dbReference type="GO" id="GO:1990351">
    <property type="term" value="C:transporter complex"/>
    <property type="evidence" value="ECO:0007669"/>
    <property type="project" value="TreeGrafter"/>
</dbReference>
<dbReference type="GO" id="GO:0001530">
    <property type="term" value="F:lipopolysaccharide binding"/>
    <property type="evidence" value="ECO:0007669"/>
    <property type="project" value="TreeGrafter"/>
</dbReference>
<dbReference type="GO" id="GO:0043165">
    <property type="term" value="P:Gram-negative-bacterium-type cell outer membrane assembly"/>
    <property type="evidence" value="ECO:0007669"/>
    <property type="project" value="UniProtKB-UniRule"/>
</dbReference>
<dbReference type="GO" id="GO:0015920">
    <property type="term" value="P:lipopolysaccharide transport"/>
    <property type="evidence" value="ECO:0007669"/>
    <property type="project" value="TreeGrafter"/>
</dbReference>
<dbReference type="FunFam" id="3.30.160.150:FF:000001">
    <property type="entry name" value="LPS-assembly lipoprotein LptE"/>
    <property type="match status" value="1"/>
</dbReference>
<dbReference type="Gene3D" id="3.30.160.150">
    <property type="entry name" value="Lipoprotein like domain"/>
    <property type="match status" value="1"/>
</dbReference>
<dbReference type="HAMAP" id="MF_01186">
    <property type="entry name" value="LPS_assembly_LptE"/>
    <property type="match status" value="1"/>
</dbReference>
<dbReference type="InterPro" id="IPR007485">
    <property type="entry name" value="LPS_assembly_LptE"/>
</dbReference>
<dbReference type="NCBIfam" id="NF008062">
    <property type="entry name" value="PRK10796.1"/>
    <property type="match status" value="1"/>
</dbReference>
<dbReference type="PANTHER" id="PTHR38098">
    <property type="entry name" value="LPS-ASSEMBLY LIPOPROTEIN LPTE"/>
    <property type="match status" value="1"/>
</dbReference>
<dbReference type="PANTHER" id="PTHR38098:SF1">
    <property type="entry name" value="LPS-ASSEMBLY LIPOPROTEIN LPTE"/>
    <property type="match status" value="1"/>
</dbReference>
<dbReference type="Pfam" id="PF04390">
    <property type="entry name" value="LptE"/>
    <property type="match status" value="1"/>
</dbReference>
<dbReference type="PROSITE" id="PS51257">
    <property type="entry name" value="PROKAR_LIPOPROTEIN"/>
    <property type="match status" value="1"/>
</dbReference>
<reference key="1">
    <citation type="journal article" date="2008" name="J. Bacteriol.">
        <title>The pangenome structure of Escherichia coli: comparative genomic analysis of E. coli commensal and pathogenic isolates.</title>
        <authorList>
            <person name="Rasko D.A."/>
            <person name="Rosovitz M.J."/>
            <person name="Myers G.S.A."/>
            <person name="Mongodin E.F."/>
            <person name="Fricke W.F."/>
            <person name="Gajer P."/>
            <person name="Crabtree J."/>
            <person name="Sebaihia M."/>
            <person name="Thomson N.R."/>
            <person name="Chaudhuri R."/>
            <person name="Henderson I.R."/>
            <person name="Sperandio V."/>
            <person name="Ravel J."/>
        </authorList>
    </citation>
    <scope>NUCLEOTIDE SEQUENCE [LARGE SCALE GENOMIC DNA]</scope>
    <source>
        <strain>E24377A / ETEC</strain>
    </source>
</reference>
<feature type="signal peptide" evidence="1">
    <location>
        <begin position="1"/>
        <end position="18"/>
    </location>
</feature>
<feature type="chain" id="PRO_1000065824" description="LPS-assembly lipoprotein LptE">
    <location>
        <begin position="19"/>
        <end position="193"/>
    </location>
</feature>
<feature type="region of interest" description="Disordered" evidence="2">
    <location>
        <begin position="166"/>
        <end position="193"/>
    </location>
</feature>
<feature type="compositionally biased region" description="Low complexity" evidence="2">
    <location>
        <begin position="174"/>
        <end position="186"/>
    </location>
</feature>
<feature type="lipid moiety-binding region" description="N-palmitoyl cysteine" evidence="1">
    <location>
        <position position="19"/>
    </location>
</feature>
<feature type="lipid moiety-binding region" description="S-diacylglycerol cysteine" evidence="1">
    <location>
        <position position="19"/>
    </location>
</feature>
<organism>
    <name type="scientific">Escherichia coli O139:H28 (strain E24377A / ETEC)</name>
    <dbReference type="NCBI Taxonomy" id="331111"/>
    <lineage>
        <taxon>Bacteria</taxon>
        <taxon>Pseudomonadati</taxon>
        <taxon>Pseudomonadota</taxon>
        <taxon>Gammaproteobacteria</taxon>
        <taxon>Enterobacterales</taxon>
        <taxon>Enterobacteriaceae</taxon>
        <taxon>Escherichia</taxon>
    </lineage>
</organism>
<evidence type="ECO:0000255" key="1">
    <source>
        <dbReference type="HAMAP-Rule" id="MF_01186"/>
    </source>
</evidence>
<evidence type="ECO:0000256" key="2">
    <source>
        <dbReference type="SAM" id="MobiDB-lite"/>
    </source>
</evidence>
<protein>
    <recommendedName>
        <fullName evidence="1">LPS-assembly lipoprotein LptE</fullName>
    </recommendedName>
</protein>
<proteinExistence type="inferred from homology"/>
<gene>
    <name evidence="1" type="primary">lptE</name>
    <name type="synonym">rlpB</name>
    <name type="ordered locus">EcE24377A_0667</name>
</gene>
<accession>A7ZJ30</accession>
<comment type="function">
    <text evidence="1">Together with LptD, is involved in the assembly of lipopolysaccharide (LPS) at the surface of the outer membrane. Required for the proper assembly of LptD. Binds LPS and may serve as the LPS recognition site at the outer membrane.</text>
</comment>
<comment type="subunit">
    <text evidence="1">Component of the lipopolysaccharide transport and assembly complex. Interacts with LptD.</text>
</comment>
<comment type="subcellular location">
    <subcellularLocation>
        <location evidence="1">Cell outer membrane</location>
        <topology evidence="1">Lipid-anchor</topology>
    </subcellularLocation>
</comment>
<comment type="similarity">
    <text evidence="1">Belongs to the LptE lipoprotein family.</text>
</comment>
<keyword id="KW-0998">Cell outer membrane</keyword>
<keyword id="KW-0449">Lipoprotein</keyword>
<keyword id="KW-0472">Membrane</keyword>
<keyword id="KW-0564">Palmitate</keyword>
<keyword id="KW-1185">Reference proteome</keyword>
<keyword id="KW-0732">Signal</keyword>